<reference key="1">
    <citation type="journal article" date="2006" name="Proc. Natl. Acad. Sci. U.S.A.">
        <title>The partitioned Rhizobium etli genome: genetic and metabolic redundancy in seven interacting replicons.</title>
        <authorList>
            <person name="Gonzalez V."/>
            <person name="Santamaria R.I."/>
            <person name="Bustos P."/>
            <person name="Hernandez-Gonzalez I."/>
            <person name="Medrano-Soto A."/>
            <person name="Moreno-Hagelsieb G."/>
            <person name="Janga S.C."/>
            <person name="Ramirez M.A."/>
            <person name="Jimenez-Jacinto V."/>
            <person name="Collado-Vides J."/>
            <person name="Davila G."/>
        </authorList>
    </citation>
    <scope>NUCLEOTIDE SEQUENCE [LARGE SCALE GENOMIC DNA]</scope>
    <source>
        <strain>ATCC 51251 / DSM 11541 / JCM 21823 / NBRC 15573 / CFN 42</strain>
    </source>
</reference>
<gene>
    <name evidence="1" type="primary">purL</name>
    <name type="ordered locus">RHE_CH02286</name>
</gene>
<comment type="function">
    <text evidence="1">Part of the phosphoribosylformylglycinamidine synthase complex involved in the purines biosynthetic pathway. Catalyzes the ATP-dependent conversion of formylglycinamide ribonucleotide (FGAR) and glutamine to yield formylglycinamidine ribonucleotide (FGAM) and glutamate. The FGAM synthase complex is composed of three subunits. PurQ produces an ammonia molecule by converting glutamine to glutamate. PurL transfers the ammonia molecule to FGAR to form FGAM in an ATP-dependent manner. PurS interacts with PurQ and PurL and is thought to assist in the transfer of the ammonia molecule from PurQ to PurL.</text>
</comment>
<comment type="catalytic activity">
    <reaction evidence="1">
        <text>N(2)-formyl-N(1)-(5-phospho-beta-D-ribosyl)glycinamide + L-glutamine + ATP + H2O = 2-formamido-N(1)-(5-O-phospho-beta-D-ribosyl)acetamidine + L-glutamate + ADP + phosphate + H(+)</text>
        <dbReference type="Rhea" id="RHEA:17129"/>
        <dbReference type="ChEBI" id="CHEBI:15377"/>
        <dbReference type="ChEBI" id="CHEBI:15378"/>
        <dbReference type="ChEBI" id="CHEBI:29985"/>
        <dbReference type="ChEBI" id="CHEBI:30616"/>
        <dbReference type="ChEBI" id="CHEBI:43474"/>
        <dbReference type="ChEBI" id="CHEBI:58359"/>
        <dbReference type="ChEBI" id="CHEBI:147286"/>
        <dbReference type="ChEBI" id="CHEBI:147287"/>
        <dbReference type="ChEBI" id="CHEBI:456216"/>
        <dbReference type="EC" id="6.3.5.3"/>
    </reaction>
</comment>
<comment type="pathway">
    <text evidence="1">Purine metabolism; IMP biosynthesis via de novo pathway; 5-amino-1-(5-phospho-D-ribosyl)imidazole from N(2)-formyl-N(1)-(5-phospho-D-ribosyl)glycinamide: step 1/2.</text>
</comment>
<comment type="subunit">
    <text evidence="1">Monomer. Part of the FGAM synthase complex composed of 1 PurL, 1 PurQ and 2 PurS subunits.</text>
</comment>
<comment type="subcellular location">
    <subcellularLocation>
        <location evidence="1">Cytoplasm</location>
    </subcellularLocation>
</comment>
<comment type="similarity">
    <text evidence="1">Belongs to the FGAMS family.</text>
</comment>
<feature type="chain" id="PRO_1000050340" description="Phosphoribosylformylglycinamidine synthase subunit PurL">
    <location>
        <begin position="1"/>
        <end position="743"/>
    </location>
</feature>
<feature type="active site" evidence="1">
    <location>
        <position position="50"/>
    </location>
</feature>
<feature type="active site" description="Proton acceptor" evidence="1">
    <location>
        <position position="96"/>
    </location>
</feature>
<feature type="binding site" evidence="1">
    <location>
        <position position="53"/>
    </location>
    <ligand>
        <name>ATP</name>
        <dbReference type="ChEBI" id="CHEBI:30616"/>
    </ligand>
</feature>
<feature type="binding site" evidence="1">
    <location>
        <position position="92"/>
    </location>
    <ligand>
        <name>ATP</name>
        <dbReference type="ChEBI" id="CHEBI:30616"/>
    </ligand>
</feature>
<feature type="binding site" evidence="1">
    <location>
        <position position="94"/>
    </location>
    <ligand>
        <name>Mg(2+)</name>
        <dbReference type="ChEBI" id="CHEBI:18420"/>
        <label>1</label>
    </ligand>
</feature>
<feature type="binding site" evidence="1">
    <location>
        <begin position="95"/>
        <end position="98"/>
    </location>
    <ligand>
        <name>substrate</name>
    </ligand>
</feature>
<feature type="binding site" evidence="1">
    <location>
        <position position="117"/>
    </location>
    <ligand>
        <name>substrate</name>
    </ligand>
</feature>
<feature type="binding site" evidence="1">
    <location>
        <position position="118"/>
    </location>
    <ligand>
        <name>Mg(2+)</name>
        <dbReference type="ChEBI" id="CHEBI:18420"/>
        <label>2</label>
    </ligand>
</feature>
<feature type="binding site" evidence="1">
    <location>
        <position position="241"/>
    </location>
    <ligand>
        <name>substrate</name>
    </ligand>
</feature>
<feature type="binding site" evidence="1">
    <location>
        <position position="269"/>
    </location>
    <ligand>
        <name>Mg(2+)</name>
        <dbReference type="ChEBI" id="CHEBI:18420"/>
        <label>2</label>
    </ligand>
</feature>
<feature type="binding site" evidence="1">
    <location>
        <begin position="313"/>
        <end position="315"/>
    </location>
    <ligand>
        <name>substrate</name>
    </ligand>
</feature>
<feature type="binding site" evidence="1">
    <location>
        <position position="495"/>
    </location>
    <ligand>
        <name>ATP</name>
        <dbReference type="ChEBI" id="CHEBI:30616"/>
    </ligand>
</feature>
<feature type="binding site" evidence="1">
    <location>
        <position position="532"/>
    </location>
    <ligand>
        <name>ATP</name>
        <dbReference type="ChEBI" id="CHEBI:30616"/>
    </ligand>
</feature>
<feature type="binding site" evidence="1">
    <location>
        <position position="533"/>
    </location>
    <ligand>
        <name>Mg(2+)</name>
        <dbReference type="ChEBI" id="CHEBI:18420"/>
        <label>1</label>
    </ligand>
</feature>
<feature type="binding site" evidence="1">
    <location>
        <position position="535"/>
    </location>
    <ligand>
        <name>substrate</name>
    </ligand>
</feature>
<sequence>MTISNTIPITPELIAGHGLKPDEYQRILDLIGREPTFTELGIFSAMWNEHCSYKSSKKWLRTLPTKGPRVIQGPGENAGVVDIDDGDCVVFKMESHNHPSYIEPYQGAATGVGGILRDVFTMGARPIAAMNALRFGEPDHPKTRHLVSGVVSGVGGYGNSFGVPTVGGEVEFDARYNGNILVNAFAAGIAKSNAIFLSEAKGVGLPVVYLGAKTGRDGVGGATMASAEFDESIEEKRPTVQVGDPFTEKCLLEACLELMQTGAVIAIQDMGAAGLTCSAVEMGAKGDLGILLELDKVPVREERMTAYEMMLSESQERMLMVLQPEKEEQAKAIFVKWGLDFAIVGKTTDDLRFRVVHQGEEVANLPIKDLGDQAPEYDRPWRECGKPAPLPANLVAAPKNYGQALLQLVGSANQSSRRWVYEQYDTLIQGNSLQLPGGDAGVVRVDGHKSKALAFSSDVTPRYVEADPFEGGKQAVAECWRNITATGAEPLAATDNLNFGNPEKPEIMGQFVQAVKGIGEACRALDFPIVSGNVSLYNETNGVAILPTPTIAGVGLLPDWRKMARIGSANDGDKVIMIGLDGSHLGQSVYLRDVLDSREGPAPEVDLFAERRNGDFVRSVIRNGQATACHDISSGGLAVALAEMAMASGKGLTIDLDECKGAPHALLFGEDQARYVLTVPADVADFVCANAEGAGVPFRRLGTVGGDALVVGDLIALPIQQLRDTHESWFPDFMEGRGELAAE</sequence>
<protein>
    <recommendedName>
        <fullName evidence="1">Phosphoribosylformylglycinamidine synthase subunit PurL</fullName>
        <shortName evidence="1">FGAM synthase</shortName>
        <ecNumber evidence="1">6.3.5.3</ecNumber>
    </recommendedName>
    <alternativeName>
        <fullName evidence="1">Formylglycinamide ribonucleotide amidotransferase subunit II</fullName>
        <shortName evidence="1">FGAR amidotransferase II</shortName>
        <shortName evidence="1">FGAR-AT II</shortName>
    </alternativeName>
    <alternativeName>
        <fullName evidence="1">Glutamine amidotransferase PurL</fullName>
    </alternativeName>
    <alternativeName>
        <fullName evidence="1">Phosphoribosylformylglycinamidine synthase subunit II</fullName>
    </alternativeName>
</protein>
<dbReference type="EC" id="6.3.5.3" evidence="1"/>
<dbReference type="EMBL" id="CP000133">
    <property type="protein sequence ID" value="ABC91066.1"/>
    <property type="molecule type" value="Genomic_DNA"/>
</dbReference>
<dbReference type="RefSeq" id="WP_011425546.1">
    <property type="nucleotide sequence ID" value="NC_007761.1"/>
</dbReference>
<dbReference type="SMR" id="Q2K7X0"/>
<dbReference type="KEGG" id="ret:RHE_CH02286"/>
<dbReference type="eggNOG" id="COG0046">
    <property type="taxonomic scope" value="Bacteria"/>
</dbReference>
<dbReference type="HOGENOM" id="CLU_003100_0_1_5"/>
<dbReference type="OrthoDB" id="9804441at2"/>
<dbReference type="UniPathway" id="UPA00074">
    <property type="reaction ID" value="UER00128"/>
</dbReference>
<dbReference type="Proteomes" id="UP000001936">
    <property type="component" value="Chromosome"/>
</dbReference>
<dbReference type="GO" id="GO:0005737">
    <property type="term" value="C:cytoplasm"/>
    <property type="evidence" value="ECO:0007669"/>
    <property type="project" value="UniProtKB-SubCell"/>
</dbReference>
<dbReference type="GO" id="GO:0005524">
    <property type="term" value="F:ATP binding"/>
    <property type="evidence" value="ECO:0007669"/>
    <property type="project" value="UniProtKB-UniRule"/>
</dbReference>
<dbReference type="GO" id="GO:0000287">
    <property type="term" value="F:magnesium ion binding"/>
    <property type="evidence" value="ECO:0007669"/>
    <property type="project" value="UniProtKB-UniRule"/>
</dbReference>
<dbReference type="GO" id="GO:0004642">
    <property type="term" value="F:phosphoribosylformylglycinamidine synthase activity"/>
    <property type="evidence" value="ECO:0007669"/>
    <property type="project" value="UniProtKB-UniRule"/>
</dbReference>
<dbReference type="GO" id="GO:0006189">
    <property type="term" value="P:'de novo' IMP biosynthetic process"/>
    <property type="evidence" value="ECO:0007669"/>
    <property type="project" value="UniProtKB-UniRule"/>
</dbReference>
<dbReference type="CDD" id="cd02203">
    <property type="entry name" value="PurL_repeat1"/>
    <property type="match status" value="1"/>
</dbReference>
<dbReference type="CDD" id="cd02204">
    <property type="entry name" value="PurL_repeat2"/>
    <property type="match status" value="1"/>
</dbReference>
<dbReference type="FunFam" id="3.30.1330.10:FF:000004">
    <property type="entry name" value="Phosphoribosylformylglycinamidine synthase subunit PurL"/>
    <property type="match status" value="1"/>
</dbReference>
<dbReference type="Gene3D" id="3.90.650.10">
    <property type="entry name" value="PurM-like C-terminal domain"/>
    <property type="match status" value="2"/>
</dbReference>
<dbReference type="Gene3D" id="3.30.1330.10">
    <property type="entry name" value="PurM-like, N-terminal domain"/>
    <property type="match status" value="2"/>
</dbReference>
<dbReference type="HAMAP" id="MF_00420">
    <property type="entry name" value="PurL_2"/>
    <property type="match status" value="1"/>
</dbReference>
<dbReference type="InterPro" id="IPR010074">
    <property type="entry name" value="PRibForGlyAmidine_synth_PurL"/>
</dbReference>
<dbReference type="InterPro" id="IPR041609">
    <property type="entry name" value="PurL_linker"/>
</dbReference>
<dbReference type="InterPro" id="IPR010918">
    <property type="entry name" value="PurM-like_C_dom"/>
</dbReference>
<dbReference type="InterPro" id="IPR036676">
    <property type="entry name" value="PurM-like_C_sf"/>
</dbReference>
<dbReference type="InterPro" id="IPR016188">
    <property type="entry name" value="PurM-like_N"/>
</dbReference>
<dbReference type="InterPro" id="IPR036921">
    <property type="entry name" value="PurM-like_N_sf"/>
</dbReference>
<dbReference type="NCBIfam" id="TIGR01736">
    <property type="entry name" value="FGAM_synth_II"/>
    <property type="match status" value="1"/>
</dbReference>
<dbReference type="NCBIfam" id="NF002290">
    <property type="entry name" value="PRK01213.1"/>
    <property type="match status" value="1"/>
</dbReference>
<dbReference type="PANTHER" id="PTHR43555">
    <property type="entry name" value="PHOSPHORIBOSYLFORMYLGLYCINAMIDINE SYNTHASE SUBUNIT PURL"/>
    <property type="match status" value="1"/>
</dbReference>
<dbReference type="PANTHER" id="PTHR43555:SF1">
    <property type="entry name" value="PHOSPHORIBOSYLFORMYLGLYCINAMIDINE SYNTHASE SUBUNIT PURL"/>
    <property type="match status" value="1"/>
</dbReference>
<dbReference type="Pfam" id="PF00586">
    <property type="entry name" value="AIRS"/>
    <property type="match status" value="2"/>
</dbReference>
<dbReference type="Pfam" id="PF02769">
    <property type="entry name" value="AIRS_C"/>
    <property type="match status" value="2"/>
</dbReference>
<dbReference type="Pfam" id="PF18072">
    <property type="entry name" value="FGAR-AT_linker"/>
    <property type="match status" value="1"/>
</dbReference>
<dbReference type="PIRSF" id="PIRSF001587">
    <property type="entry name" value="FGAM_synthase_II"/>
    <property type="match status" value="1"/>
</dbReference>
<dbReference type="SUPFAM" id="SSF56042">
    <property type="entry name" value="PurM C-terminal domain-like"/>
    <property type="match status" value="2"/>
</dbReference>
<dbReference type="SUPFAM" id="SSF55326">
    <property type="entry name" value="PurM N-terminal domain-like"/>
    <property type="match status" value="2"/>
</dbReference>
<accession>Q2K7X0</accession>
<evidence type="ECO:0000255" key="1">
    <source>
        <dbReference type="HAMAP-Rule" id="MF_00420"/>
    </source>
</evidence>
<proteinExistence type="inferred from homology"/>
<keyword id="KW-0067">ATP-binding</keyword>
<keyword id="KW-0963">Cytoplasm</keyword>
<keyword id="KW-0436">Ligase</keyword>
<keyword id="KW-0460">Magnesium</keyword>
<keyword id="KW-0479">Metal-binding</keyword>
<keyword id="KW-0547">Nucleotide-binding</keyword>
<keyword id="KW-0658">Purine biosynthesis</keyword>
<keyword id="KW-1185">Reference proteome</keyword>
<name>PURL_RHIEC</name>
<organism>
    <name type="scientific">Rhizobium etli (strain ATCC 51251 / DSM 11541 / JCM 21823 / NBRC 15573 / CFN 42)</name>
    <dbReference type="NCBI Taxonomy" id="347834"/>
    <lineage>
        <taxon>Bacteria</taxon>
        <taxon>Pseudomonadati</taxon>
        <taxon>Pseudomonadota</taxon>
        <taxon>Alphaproteobacteria</taxon>
        <taxon>Hyphomicrobiales</taxon>
        <taxon>Rhizobiaceae</taxon>
        <taxon>Rhizobium/Agrobacterium group</taxon>
        <taxon>Rhizobium</taxon>
    </lineage>
</organism>